<protein>
    <recommendedName>
        <fullName evidence="1">Large ribosomal subunit protein uL23</fullName>
    </recommendedName>
    <alternativeName>
        <fullName evidence="2">50S ribosomal protein L23</fullName>
    </alternativeName>
</protein>
<organism>
    <name type="scientific">Azoarcus sp. (strain BH72)</name>
    <dbReference type="NCBI Taxonomy" id="418699"/>
    <lineage>
        <taxon>Bacteria</taxon>
        <taxon>Pseudomonadati</taxon>
        <taxon>Pseudomonadota</taxon>
        <taxon>Betaproteobacteria</taxon>
        <taxon>Rhodocyclales</taxon>
        <taxon>Zoogloeaceae</taxon>
        <taxon>Azoarcus</taxon>
    </lineage>
</organism>
<name>RL23_AZOSB</name>
<accession>A1KB25</accession>
<keyword id="KW-1185">Reference proteome</keyword>
<keyword id="KW-0687">Ribonucleoprotein</keyword>
<keyword id="KW-0689">Ribosomal protein</keyword>
<keyword id="KW-0694">RNA-binding</keyword>
<keyword id="KW-0699">rRNA-binding</keyword>
<dbReference type="EMBL" id="AM406670">
    <property type="protein sequence ID" value="CAL96031.1"/>
    <property type="molecule type" value="Genomic_DNA"/>
</dbReference>
<dbReference type="SMR" id="A1KB25"/>
<dbReference type="STRING" id="62928.azo3415"/>
<dbReference type="KEGG" id="aoa:dqs_3554"/>
<dbReference type="KEGG" id="azo:azo3415"/>
<dbReference type="eggNOG" id="COG0089">
    <property type="taxonomic scope" value="Bacteria"/>
</dbReference>
<dbReference type="HOGENOM" id="CLU_037562_3_1_4"/>
<dbReference type="OrthoDB" id="9793353at2"/>
<dbReference type="Proteomes" id="UP000002588">
    <property type="component" value="Chromosome"/>
</dbReference>
<dbReference type="GO" id="GO:1990904">
    <property type="term" value="C:ribonucleoprotein complex"/>
    <property type="evidence" value="ECO:0007669"/>
    <property type="project" value="UniProtKB-KW"/>
</dbReference>
<dbReference type="GO" id="GO:0005840">
    <property type="term" value="C:ribosome"/>
    <property type="evidence" value="ECO:0007669"/>
    <property type="project" value="UniProtKB-KW"/>
</dbReference>
<dbReference type="GO" id="GO:0019843">
    <property type="term" value="F:rRNA binding"/>
    <property type="evidence" value="ECO:0007669"/>
    <property type="project" value="UniProtKB-UniRule"/>
</dbReference>
<dbReference type="GO" id="GO:0003735">
    <property type="term" value="F:structural constituent of ribosome"/>
    <property type="evidence" value="ECO:0007669"/>
    <property type="project" value="InterPro"/>
</dbReference>
<dbReference type="GO" id="GO:0006412">
    <property type="term" value="P:translation"/>
    <property type="evidence" value="ECO:0007669"/>
    <property type="project" value="UniProtKB-UniRule"/>
</dbReference>
<dbReference type="FunFam" id="3.30.70.330:FF:000001">
    <property type="entry name" value="50S ribosomal protein L23"/>
    <property type="match status" value="1"/>
</dbReference>
<dbReference type="Gene3D" id="3.30.70.330">
    <property type="match status" value="1"/>
</dbReference>
<dbReference type="HAMAP" id="MF_01369_B">
    <property type="entry name" value="Ribosomal_uL23_B"/>
    <property type="match status" value="1"/>
</dbReference>
<dbReference type="InterPro" id="IPR012677">
    <property type="entry name" value="Nucleotide-bd_a/b_plait_sf"/>
</dbReference>
<dbReference type="InterPro" id="IPR013025">
    <property type="entry name" value="Ribosomal_uL23-like"/>
</dbReference>
<dbReference type="InterPro" id="IPR012678">
    <property type="entry name" value="Ribosomal_uL23/eL15/eS24_sf"/>
</dbReference>
<dbReference type="NCBIfam" id="NF004359">
    <property type="entry name" value="PRK05738.1-3"/>
    <property type="match status" value="1"/>
</dbReference>
<dbReference type="NCBIfam" id="NF004363">
    <property type="entry name" value="PRK05738.2-4"/>
    <property type="match status" value="1"/>
</dbReference>
<dbReference type="PANTHER" id="PTHR11620">
    <property type="entry name" value="60S RIBOSOMAL PROTEIN L23A"/>
    <property type="match status" value="1"/>
</dbReference>
<dbReference type="Pfam" id="PF00276">
    <property type="entry name" value="Ribosomal_L23"/>
    <property type="match status" value="1"/>
</dbReference>
<dbReference type="SUPFAM" id="SSF54189">
    <property type="entry name" value="Ribosomal proteins S24e, L23 and L15e"/>
    <property type="match status" value="1"/>
</dbReference>
<proteinExistence type="inferred from homology"/>
<reference key="1">
    <citation type="journal article" date="2006" name="Nat. Biotechnol.">
        <title>Complete genome of the mutualistic, N2-fixing grass endophyte Azoarcus sp. strain BH72.</title>
        <authorList>
            <person name="Krause A."/>
            <person name="Ramakumar A."/>
            <person name="Bartels D."/>
            <person name="Battistoni F."/>
            <person name="Bekel T."/>
            <person name="Boch J."/>
            <person name="Boehm M."/>
            <person name="Friedrich F."/>
            <person name="Hurek T."/>
            <person name="Krause L."/>
            <person name="Linke B."/>
            <person name="McHardy A.C."/>
            <person name="Sarkar A."/>
            <person name="Schneiker S."/>
            <person name="Syed A.A."/>
            <person name="Thauer R."/>
            <person name="Vorhoelter F.-J."/>
            <person name="Weidner S."/>
            <person name="Puehler A."/>
            <person name="Reinhold-Hurek B."/>
            <person name="Kaiser O."/>
            <person name="Goesmann A."/>
        </authorList>
    </citation>
    <scope>NUCLEOTIDE SEQUENCE [LARGE SCALE GENOMIC DNA]</scope>
    <source>
        <strain>BH72</strain>
    </source>
</reference>
<feature type="chain" id="PRO_1000087204" description="Large ribosomal subunit protein uL23">
    <location>
        <begin position="1"/>
        <end position="101"/>
    </location>
</feature>
<gene>
    <name evidence="1" type="primary">rplW</name>
    <name type="ordered locus">azo3415</name>
</gene>
<sequence>MSAISQERLLQVLLAPQISEKATYVADKNEQVVFKVATSATKPEVKAAVELLFKVEVKSVQISNVKGKSKRFGKMMGRRKDWKKAFVCLKPGQEINFVAGE</sequence>
<comment type="function">
    <text evidence="1">One of the early assembly proteins it binds 23S rRNA. One of the proteins that surrounds the polypeptide exit tunnel on the outside of the ribosome. Forms the main docking site for trigger factor binding to the ribosome.</text>
</comment>
<comment type="subunit">
    <text evidence="1">Part of the 50S ribosomal subunit. Contacts protein L29, and trigger factor when it is bound to the ribosome.</text>
</comment>
<comment type="similarity">
    <text evidence="1">Belongs to the universal ribosomal protein uL23 family.</text>
</comment>
<evidence type="ECO:0000255" key="1">
    <source>
        <dbReference type="HAMAP-Rule" id="MF_01369"/>
    </source>
</evidence>
<evidence type="ECO:0000305" key="2"/>